<comment type="function">
    <text evidence="1">Involved in the binding of tRNA to the ribosomes.</text>
</comment>
<comment type="subunit">
    <text evidence="1">Part of the 30S ribosomal subunit.</text>
</comment>
<comment type="similarity">
    <text evidence="1">Belongs to the universal ribosomal protein uS10 family.</text>
</comment>
<proteinExistence type="inferred from homology"/>
<reference key="1">
    <citation type="journal article" date="2007" name="Proc. Natl. Acad. Sci. U.S.A.">
        <title>Genomic and metabolic adaptations of Methanobrevibacter smithii to the human gut.</title>
        <authorList>
            <person name="Samuel B.S."/>
            <person name="Hansen E.E."/>
            <person name="Manchester J.K."/>
            <person name="Coutinho P.M."/>
            <person name="Henrissat B."/>
            <person name="Fulton R."/>
            <person name="Latreille P."/>
            <person name="Kim K."/>
            <person name="Wilson R.K."/>
            <person name="Gordon J.I."/>
        </authorList>
    </citation>
    <scope>NUCLEOTIDE SEQUENCE [LARGE SCALE GENOMIC DNA]</scope>
    <source>
        <strain>ATCC 35061 / DSM 861 / OCM 144 / PS</strain>
    </source>
</reference>
<gene>
    <name evidence="1" type="primary">rps10</name>
    <name type="ordered locus">Msm_0897</name>
</gene>
<feature type="chain" id="PRO_1000015057" description="Small ribosomal subunit protein uS10">
    <location>
        <begin position="1"/>
        <end position="102"/>
    </location>
</feature>
<dbReference type="EMBL" id="CP000678">
    <property type="protein sequence ID" value="ABQ87102.1"/>
    <property type="molecule type" value="Genomic_DNA"/>
</dbReference>
<dbReference type="SMR" id="A5ULM4"/>
<dbReference type="STRING" id="420247.Msm_0897"/>
<dbReference type="EnsemblBacteria" id="ABQ87102">
    <property type="protein sequence ID" value="ABQ87102"/>
    <property type="gene ID" value="Msm_0897"/>
</dbReference>
<dbReference type="KEGG" id="msi:Msm_0897"/>
<dbReference type="PATRIC" id="fig|420247.28.peg.894"/>
<dbReference type="eggNOG" id="arCOG01758">
    <property type="taxonomic scope" value="Archaea"/>
</dbReference>
<dbReference type="HOGENOM" id="CLU_122625_0_1_2"/>
<dbReference type="Proteomes" id="UP000001992">
    <property type="component" value="Chromosome"/>
</dbReference>
<dbReference type="GO" id="GO:0015935">
    <property type="term" value="C:small ribosomal subunit"/>
    <property type="evidence" value="ECO:0007669"/>
    <property type="project" value="InterPro"/>
</dbReference>
<dbReference type="GO" id="GO:0003735">
    <property type="term" value="F:structural constituent of ribosome"/>
    <property type="evidence" value="ECO:0007669"/>
    <property type="project" value="InterPro"/>
</dbReference>
<dbReference type="GO" id="GO:0000049">
    <property type="term" value="F:tRNA binding"/>
    <property type="evidence" value="ECO:0007669"/>
    <property type="project" value="UniProtKB-UniRule"/>
</dbReference>
<dbReference type="GO" id="GO:0006412">
    <property type="term" value="P:translation"/>
    <property type="evidence" value="ECO:0007669"/>
    <property type="project" value="UniProtKB-UniRule"/>
</dbReference>
<dbReference type="FunFam" id="3.30.70.600:FF:000004">
    <property type="entry name" value="30S ribosomal protein S10"/>
    <property type="match status" value="1"/>
</dbReference>
<dbReference type="Gene3D" id="3.30.70.600">
    <property type="entry name" value="Ribosomal protein S10 domain"/>
    <property type="match status" value="1"/>
</dbReference>
<dbReference type="HAMAP" id="MF_00508">
    <property type="entry name" value="Ribosomal_uS10"/>
    <property type="match status" value="1"/>
</dbReference>
<dbReference type="InterPro" id="IPR001848">
    <property type="entry name" value="Ribosomal_uS10"/>
</dbReference>
<dbReference type="InterPro" id="IPR018268">
    <property type="entry name" value="Ribosomal_uS10_CS"/>
</dbReference>
<dbReference type="InterPro" id="IPR027486">
    <property type="entry name" value="Ribosomal_uS10_dom"/>
</dbReference>
<dbReference type="InterPro" id="IPR036838">
    <property type="entry name" value="Ribosomal_uS10_dom_sf"/>
</dbReference>
<dbReference type="InterPro" id="IPR005729">
    <property type="entry name" value="Ribosomal_uS10_euk/arc"/>
</dbReference>
<dbReference type="NCBIfam" id="TIGR01046">
    <property type="entry name" value="uS10_euk_arch"/>
    <property type="match status" value="1"/>
</dbReference>
<dbReference type="PANTHER" id="PTHR11700">
    <property type="entry name" value="30S RIBOSOMAL PROTEIN S10 FAMILY MEMBER"/>
    <property type="match status" value="1"/>
</dbReference>
<dbReference type="Pfam" id="PF00338">
    <property type="entry name" value="Ribosomal_S10"/>
    <property type="match status" value="1"/>
</dbReference>
<dbReference type="PRINTS" id="PR00971">
    <property type="entry name" value="RIBOSOMALS10"/>
</dbReference>
<dbReference type="SMART" id="SM01403">
    <property type="entry name" value="Ribosomal_S10"/>
    <property type="match status" value="1"/>
</dbReference>
<dbReference type="SUPFAM" id="SSF54999">
    <property type="entry name" value="Ribosomal protein S10"/>
    <property type="match status" value="1"/>
</dbReference>
<dbReference type="PROSITE" id="PS00361">
    <property type="entry name" value="RIBOSOMAL_S10"/>
    <property type="match status" value="1"/>
</dbReference>
<evidence type="ECO:0000255" key="1">
    <source>
        <dbReference type="HAMAP-Rule" id="MF_00508"/>
    </source>
</evidence>
<evidence type="ECO:0000305" key="2"/>
<sequence>MHQARIKLTGTDPEKLAYVCDQLKKIAERTGVDLSGPIPLPTKKLVVPTRKSPDGEGKASWEKWELRIHKRLVGIGADERAMRQVMKVNVPDNVSIEIELKG</sequence>
<organism>
    <name type="scientific">Methanobrevibacter smithii (strain ATCC 35061 / DSM 861 / OCM 144 / PS)</name>
    <dbReference type="NCBI Taxonomy" id="420247"/>
    <lineage>
        <taxon>Archaea</taxon>
        <taxon>Methanobacteriati</taxon>
        <taxon>Methanobacteriota</taxon>
        <taxon>Methanomada group</taxon>
        <taxon>Methanobacteria</taxon>
        <taxon>Methanobacteriales</taxon>
        <taxon>Methanobacteriaceae</taxon>
        <taxon>Methanobrevibacter</taxon>
    </lineage>
</organism>
<protein>
    <recommendedName>
        <fullName evidence="1">Small ribosomal subunit protein uS10</fullName>
    </recommendedName>
    <alternativeName>
        <fullName evidence="2">30S ribosomal protein S10</fullName>
    </alternativeName>
</protein>
<name>RS10_METS3</name>
<keyword id="KW-0687">Ribonucleoprotein</keyword>
<keyword id="KW-0689">Ribosomal protein</keyword>
<accession>A5ULM4</accession>